<comment type="similarity">
    <text evidence="1">Belongs to the UPF0260 family.</text>
</comment>
<reference key="1">
    <citation type="journal article" date="2006" name="Appl. Environ. Microbiol.">
        <title>Complete genome sequence of the marine, chemolithoautotrophic, ammonia-oxidizing bacterium Nitrosococcus oceani ATCC 19707.</title>
        <authorList>
            <person name="Klotz M.G."/>
            <person name="Arp D.J."/>
            <person name="Chain P.S.G."/>
            <person name="El-Sheikh A.F."/>
            <person name="Hauser L.J."/>
            <person name="Hommes N.G."/>
            <person name="Larimer F.W."/>
            <person name="Malfatti S.A."/>
            <person name="Norton J.M."/>
            <person name="Poret-Peterson A.T."/>
            <person name="Vergez L.M."/>
            <person name="Ward B.B."/>
        </authorList>
    </citation>
    <scope>NUCLEOTIDE SEQUENCE [LARGE SCALE GENOMIC DNA]</scope>
    <source>
        <strain>ATCC 19707 / BCRC 17464 / JCM 30415 / NCIMB 11848 / C-107</strain>
    </source>
</reference>
<feature type="chain" id="PRO_1000072725" description="UPF0260 protein Noc_1358">
    <location>
        <begin position="1"/>
        <end position="147"/>
    </location>
</feature>
<protein>
    <recommendedName>
        <fullName evidence="1">UPF0260 protein Noc_1358</fullName>
    </recommendedName>
</protein>
<dbReference type="EMBL" id="CP000127">
    <property type="protein sequence ID" value="ABA57852.1"/>
    <property type="molecule type" value="Genomic_DNA"/>
</dbReference>
<dbReference type="RefSeq" id="WP_002808880.1">
    <property type="nucleotide sequence ID" value="NC_007484.1"/>
</dbReference>
<dbReference type="FunCoup" id="Q3JBE4">
    <property type="interactions" value="27"/>
</dbReference>
<dbReference type="STRING" id="323261.Noc_1358"/>
<dbReference type="KEGG" id="noc:Noc_1358"/>
<dbReference type="eggNOG" id="COG2983">
    <property type="taxonomic scope" value="Bacteria"/>
</dbReference>
<dbReference type="HOGENOM" id="CLU_109769_0_1_6"/>
<dbReference type="InParanoid" id="Q3JBE4"/>
<dbReference type="Proteomes" id="UP000006838">
    <property type="component" value="Chromosome"/>
</dbReference>
<dbReference type="HAMAP" id="MF_00676">
    <property type="entry name" value="UPF0260"/>
    <property type="match status" value="1"/>
</dbReference>
<dbReference type="InterPro" id="IPR005358">
    <property type="entry name" value="Puta_zinc/iron-chelating_dom"/>
</dbReference>
<dbReference type="InterPro" id="IPR008228">
    <property type="entry name" value="UCP006173"/>
</dbReference>
<dbReference type="NCBIfam" id="NF003501">
    <property type="entry name" value="PRK05170.1-5"/>
    <property type="match status" value="1"/>
</dbReference>
<dbReference type="NCBIfam" id="NF003507">
    <property type="entry name" value="PRK05170.2-5"/>
    <property type="match status" value="1"/>
</dbReference>
<dbReference type="PANTHER" id="PTHR37421">
    <property type="entry name" value="UPF0260 PROTEIN YCGN"/>
    <property type="match status" value="1"/>
</dbReference>
<dbReference type="PANTHER" id="PTHR37421:SF1">
    <property type="entry name" value="UPF0260 PROTEIN YCGN"/>
    <property type="match status" value="1"/>
</dbReference>
<dbReference type="Pfam" id="PF03692">
    <property type="entry name" value="CxxCxxCC"/>
    <property type="match status" value="1"/>
</dbReference>
<dbReference type="PIRSF" id="PIRSF006173">
    <property type="entry name" value="UCP006173"/>
    <property type="match status" value="1"/>
</dbReference>
<name>Y1358_NITOC</name>
<sequence length="147" mass="16810">MTEPEFWKHKPLQAMSSEEWEALCDGCGKCCLHKLEDEETGEVFYTSVACRLLDLHYCRCTDYQNRVRKVPDCLSLREELTEALKWLPSTCAYRLINEGKELFPWHPLVSGDPETVHQAGISVRGVAIPESQAGDLEDHLVDWSVKD</sequence>
<gene>
    <name type="ordered locus">Noc_1358</name>
</gene>
<organism>
    <name type="scientific">Nitrosococcus oceani (strain ATCC 19707 / BCRC 17464 / JCM 30415 / NCIMB 11848 / C-107)</name>
    <dbReference type="NCBI Taxonomy" id="323261"/>
    <lineage>
        <taxon>Bacteria</taxon>
        <taxon>Pseudomonadati</taxon>
        <taxon>Pseudomonadota</taxon>
        <taxon>Gammaproteobacteria</taxon>
        <taxon>Chromatiales</taxon>
        <taxon>Chromatiaceae</taxon>
        <taxon>Nitrosococcus</taxon>
    </lineage>
</organism>
<evidence type="ECO:0000255" key="1">
    <source>
        <dbReference type="HAMAP-Rule" id="MF_00676"/>
    </source>
</evidence>
<proteinExistence type="inferred from homology"/>
<accession>Q3JBE4</accession>
<keyword id="KW-1185">Reference proteome</keyword>